<organism>
    <name type="scientific">Photobacterium profundum (strain SS9)</name>
    <dbReference type="NCBI Taxonomy" id="298386"/>
    <lineage>
        <taxon>Bacteria</taxon>
        <taxon>Pseudomonadati</taxon>
        <taxon>Pseudomonadota</taxon>
        <taxon>Gammaproteobacteria</taxon>
        <taxon>Vibrionales</taxon>
        <taxon>Vibrionaceae</taxon>
        <taxon>Photobacterium</taxon>
    </lineage>
</organism>
<feature type="chain" id="PRO_0000227176" description="Anthranilate phosphoribosyltransferase">
    <location>
        <begin position="1"/>
        <end position="339"/>
    </location>
</feature>
<feature type="binding site" evidence="1">
    <location>
        <position position="86"/>
    </location>
    <ligand>
        <name>5-phospho-alpha-D-ribose 1-diphosphate</name>
        <dbReference type="ChEBI" id="CHEBI:58017"/>
    </ligand>
</feature>
<feature type="binding site" evidence="1">
    <location>
        <position position="86"/>
    </location>
    <ligand>
        <name>anthranilate</name>
        <dbReference type="ChEBI" id="CHEBI:16567"/>
        <label>1</label>
    </ligand>
</feature>
<feature type="binding site" evidence="1">
    <location>
        <begin position="89"/>
        <end position="90"/>
    </location>
    <ligand>
        <name>5-phospho-alpha-D-ribose 1-diphosphate</name>
        <dbReference type="ChEBI" id="CHEBI:58017"/>
    </ligand>
</feature>
<feature type="binding site" evidence="1">
    <location>
        <position position="94"/>
    </location>
    <ligand>
        <name>5-phospho-alpha-D-ribose 1-diphosphate</name>
        <dbReference type="ChEBI" id="CHEBI:58017"/>
    </ligand>
</feature>
<feature type="binding site" evidence="1">
    <location>
        <begin position="96"/>
        <end position="99"/>
    </location>
    <ligand>
        <name>5-phospho-alpha-D-ribose 1-diphosphate</name>
        <dbReference type="ChEBI" id="CHEBI:58017"/>
    </ligand>
</feature>
<feature type="binding site" evidence="1">
    <location>
        <position position="98"/>
    </location>
    <ligand>
        <name>Mg(2+)</name>
        <dbReference type="ChEBI" id="CHEBI:18420"/>
        <label>1</label>
    </ligand>
</feature>
<feature type="binding site" evidence="1">
    <location>
        <begin position="114"/>
        <end position="122"/>
    </location>
    <ligand>
        <name>5-phospho-alpha-D-ribose 1-diphosphate</name>
        <dbReference type="ChEBI" id="CHEBI:58017"/>
    </ligand>
</feature>
<feature type="binding site" evidence="1">
    <location>
        <position position="117"/>
    </location>
    <ligand>
        <name>anthranilate</name>
        <dbReference type="ChEBI" id="CHEBI:16567"/>
        <label>1</label>
    </ligand>
</feature>
<feature type="binding site" evidence="1">
    <location>
        <position position="126"/>
    </location>
    <ligand>
        <name>5-phospho-alpha-D-ribose 1-diphosphate</name>
        <dbReference type="ChEBI" id="CHEBI:58017"/>
    </ligand>
</feature>
<feature type="binding site" evidence="1">
    <location>
        <position position="172"/>
    </location>
    <ligand>
        <name>anthranilate</name>
        <dbReference type="ChEBI" id="CHEBI:16567"/>
        <label>2</label>
    </ligand>
</feature>
<feature type="binding site" evidence="1">
    <location>
        <position position="230"/>
    </location>
    <ligand>
        <name>Mg(2+)</name>
        <dbReference type="ChEBI" id="CHEBI:18420"/>
        <label>2</label>
    </ligand>
</feature>
<feature type="binding site" evidence="1">
    <location>
        <position position="231"/>
    </location>
    <ligand>
        <name>Mg(2+)</name>
        <dbReference type="ChEBI" id="CHEBI:18420"/>
        <label>1</label>
    </ligand>
</feature>
<feature type="binding site" evidence="1">
    <location>
        <position position="231"/>
    </location>
    <ligand>
        <name>Mg(2+)</name>
        <dbReference type="ChEBI" id="CHEBI:18420"/>
        <label>2</label>
    </ligand>
</feature>
<comment type="function">
    <text evidence="1">Catalyzes the transfer of the phosphoribosyl group of 5-phosphorylribose-1-pyrophosphate (PRPP) to anthranilate to yield N-(5'-phosphoribosyl)-anthranilate (PRA).</text>
</comment>
<comment type="catalytic activity">
    <reaction evidence="1">
        <text>N-(5-phospho-beta-D-ribosyl)anthranilate + diphosphate = 5-phospho-alpha-D-ribose 1-diphosphate + anthranilate</text>
        <dbReference type="Rhea" id="RHEA:11768"/>
        <dbReference type="ChEBI" id="CHEBI:16567"/>
        <dbReference type="ChEBI" id="CHEBI:18277"/>
        <dbReference type="ChEBI" id="CHEBI:33019"/>
        <dbReference type="ChEBI" id="CHEBI:58017"/>
        <dbReference type="EC" id="2.4.2.18"/>
    </reaction>
</comment>
<comment type="cofactor">
    <cofactor evidence="1">
        <name>Mg(2+)</name>
        <dbReference type="ChEBI" id="CHEBI:18420"/>
    </cofactor>
    <text evidence="1">Binds 2 magnesium ions per monomer.</text>
</comment>
<comment type="pathway">
    <text evidence="1">Amino-acid biosynthesis; L-tryptophan biosynthesis; L-tryptophan from chorismate: step 2/5.</text>
</comment>
<comment type="subunit">
    <text evidence="1">Homodimer.</text>
</comment>
<comment type="similarity">
    <text evidence="1">Belongs to the anthranilate phosphoribosyltransferase family.</text>
</comment>
<name>TRPD_PHOPR</name>
<evidence type="ECO:0000255" key="1">
    <source>
        <dbReference type="HAMAP-Rule" id="MF_00211"/>
    </source>
</evidence>
<proteinExistence type="inferred from homology"/>
<accession>Q6LPA6</accession>
<keyword id="KW-0028">Amino-acid biosynthesis</keyword>
<keyword id="KW-0057">Aromatic amino acid biosynthesis</keyword>
<keyword id="KW-0328">Glycosyltransferase</keyword>
<keyword id="KW-0460">Magnesium</keyword>
<keyword id="KW-0479">Metal-binding</keyword>
<keyword id="KW-1185">Reference proteome</keyword>
<keyword id="KW-0808">Transferase</keyword>
<keyword id="KW-0822">Tryptophan biosynthesis</keyword>
<reference key="1">
    <citation type="journal article" date="2005" name="Science">
        <title>Life at depth: Photobacterium profundum genome sequence and expression analysis.</title>
        <authorList>
            <person name="Vezzi A."/>
            <person name="Campanaro S."/>
            <person name="D'Angelo M."/>
            <person name="Simonato F."/>
            <person name="Vitulo N."/>
            <person name="Lauro F.M."/>
            <person name="Cestaro A."/>
            <person name="Malacrida G."/>
            <person name="Simionati B."/>
            <person name="Cannata N."/>
            <person name="Romualdi C."/>
            <person name="Bartlett D.H."/>
            <person name="Valle G."/>
        </authorList>
    </citation>
    <scope>NUCLEOTIDE SEQUENCE [LARGE SCALE GENOMIC DNA]</scope>
    <source>
        <strain>ATCC BAA-1253 / SS9</strain>
    </source>
</reference>
<dbReference type="EC" id="2.4.2.18" evidence="1"/>
<dbReference type="EMBL" id="CR378671">
    <property type="protein sequence ID" value="CAG20870.1"/>
    <property type="molecule type" value="Genomic_DNA"/>
</dbReference>
<dbReference type="SMR" id="Q6LPA6"/>
<dbReference type="STRING" id="298386.PBPRA2488"/>
<dbReference type="KEGG" id="ppr:PBPRA2488"/>
<dbReference type="eggNOG" id="COG0547">
    <property type="taxonomic scope" value="Bacteria"/>
</dbReference>
<dbReference type="HOGENOM" id="CLU_034315_2_1_6"/>
<dbReference type="UniPathway" id="UPA00035">
    <property type="reaction ID" value="UER00041"/>
</dbReference>
<dbReference type="Proteomes" id="UP000000593">
    <property type="component" value="Chromosome 1"/>
</dbReference>
<dbReference type="GO" id="GO:0005829">
    <property type="term" value="C:cytosol"/>
    <property type="evidence" value="ECO:0007669"/>
    <property type="project" value="TreeGrafter"/>
</dbReference>
<dbReference type="GO" id="GO:0004048">
    <property type="term" value="F:anthranilate phosphoribosyltransferase activity"/>
    <property type="evidence" value="ECO:0007669"/>
    <property type="project" value="UniProtKB-UniRule"/>
</dbReference>
<dbReference type="GO" id="GO:0000287">
    <property type="term" value="F:magnesium ion binding"/>
    <property type="evidence" value="ECO:0007669"/>
    <property type="project" value="UniProtKB-UniRule"/>
</dbReference>
<dbReference type="GO" id="GO:0000162">
    <property type="term" value="P:L-tryptophan biosynthetic process"/>
    <property type="evidence" value="ECO:0007669"/>
    <property type="project" value="UniProtKB-UniRule"/>
</dbReference>
<dbReference type="FunFam" id="3.40.1030.10:FF:000002">
    <property type="entry name" value="Anthranilate phosphoribosyltransferase"/>
    <property type="match status" value="1"/>
</dbReference>
<dbReference type="Gene3D" id="3.40.1030.10">
    <property type="entry name" value="Nucleoside phosphorylase/phosphoribosyltransferase catalytic domain"/>
    <property type="match status" value="1"/>
</dbReference>
<dbReference type="Gene3D" id="1.20.970.10">
    <property type="entry name" value="Transferase, Pyrimidine Nucleoside Phosphorylase, Chain C"/>
    <property type="match status" value="1"/>
</dbReference>
<dbReference type="HAMAP" id="MF_00211">
    <property type="entry name" value="TrpD"/>
    <property type="match status" value="1"/>
</dbReference>
<dbReference type="InterPro" id="IPR005940">
    <property type="entry name" value="Anthranilate_Pribosyl_Tfrase"/>
</dbReference>
<dbReference type="InterPro" id="IPR000312">
    <property type="entry name" value="Glycosyl_Trfase_fam3"/>
</dbReference>
<dbReference type="InterPro" id="IPR017459">
    <property type="entry name" value="Glycosyl_Trfase_fam3_N_dom"/>
</dbReference>
<dbReference type="InterPro" id="IPR036320">
    <property type="entry name" value="Glycosyl_Trfase_fam3_N_dom_sf"/>
</dbReference>
<dbReference type="InterPro" id="IPR035902">
    <property type="entry name" value="Nuc_phospho_transferase"/>
</dbReference>
<dbReference type="NCBIfam" id="TIGR01245">
    <property type="entry name" value="trpD"/>
    <property type="match status" value="1"/>
</dbReference>
<dbReference type="PANTHER" id="PTHR43285">
    <property type="entry name" value="ANTHRANILATE PHOSPHORIBOSYLTRANSFERASE"/>
    <property type="match status" value="1"/>
</dbReference>
<dbReference type="PANTHER" id="PTHR43285:SF2">
    <property type="entry name" value="ANTHRANILATE PHOSPHORIBOSYLTRANSFERASE"/>
    <property type="match status" value="1"/>
</dbReference>
<dbReference type="Pfam" id="PF02885">
    <property type="entry name" value="Glycos_trans_3N"/>
    <property type="match status" value="1"/>
</dbReference>
<dbReference type="Pfam" id="PF00591">
    <property type="entry name" value="Glycos_transf_3"/>
    <property type="match status" value="1"/>
</dbReference>
<dbReference type="SUPFAM" id="SSF52418">
    <property type="entry name" value="Nucleoside phosphorylase/phosphoribosyltransferase catalytic domain"/>
    <property type="match status" value="1"/>
</dbReference>
<dbReference type="SUPFAM" id="SSF47648">
    <property type="entry name" value="Nucleoside phosphorylase/phosphoribosyltransferase N-terminal domain"/>
    <property type="match status" value="1"/>
</dbReference>
<protein>
    <recommendedName>
        <fullName evidence="1">Anthranilate phosphoribosyltransferase</fullName>
        <ecNumber evidence="1">2.4.2.18</ecNumber>
    </recommendedName>
</protein>
<gene>
    <name evidence="1" type="primary">trpD</name>
    <name type="ordered locus">PBPRA2488</name>
</gene>
<sequence length="339" mass="35746">MMVMDAKIFEIADKLYAQQALTQDESHVLFDAIIKGDVDPILLSAVLTALKIKGETPAEIAGAASALLANANAFPSPEYDFADIVGTGGDGANTINISTTAAFVAAACGVKVAKHGNRGVSSKSGSSDLLDKFGINLAMTPENARGALDELGVCFLFAPEYHSGVRHAMPVRQTLKTRTIFNVLGPLINPARPKIELMGVYDQSLVRPIAETMVAMGMKRAAVVHGSGLDEVAIHGETLVAEIINGEIKEYTLTPADFGLETYPLEAIKGGEPEENRAIITDILTGKGTDAQQGAVAVNVALLLRLFGQEDLKANTQQAIAAMQSGKAYELVNKLAARG</sequence>